<protein>
    <recommendedName>
        <fullName>Signal transduction histidine-protein kinase/phosphatase MprB</fullName>
        <ecNumber>2.7.13.3</ecNumber>
        <ecNumber>3.1.3.-</ecNumber>
    </recommendedName>
    <alternativeName>
        <fullName>Mycobacterial persistence regulator B</fullName>
    </alternativeName>
</protein>
<organism>
    <name type="scientific">Mycobacterium ulcerans (strain Agy99)</name>
    <dbReference type="NCBI Taxonomy" id="362242"/>
    <lineage>
        <taxon>Bacteria</taxon>
        <taxon>Bacillati</taxon>
        <taxon>Actinomycetota</taxon>
        <taxon>Actinomycetes</taxon>
        <taxon>Mycobacteriales</taxon>
        <taxon>Mycobacteriaceae</taxon>
        <taxon>Mycobacterium</taxon>
        <taxon>Mycobacterium ulcerans group</taxon>
    </lineage>
</organism>
<name>MPRB_MYCUA</name>
<feature type="chain" id="PRO_0000308442" description="Signal transduction histidine-protein kinase/phosphatase MprB">
    <location>
        <begin position="1"/>
        <end position="511"/>
    </location>
</feature>
<feature type="topological domain" description="Cytoplasmic" evidence="2">
    <location>
        <begin position="1"/>
        <end position="26"/>
    </location>
</feature>
<feature type="transmembrane region" description="Helical" evidence="2">
    <location>
        <begin position="27"/>
        <end position="47"/>
    </location>
</feature>
<feature type="topological domain" description="Extracellular" evidence="2">
    <location>
        <begin position="48"/>
        <end position="163"/>
    </location>
</feature>
<feature type="transmembrane region" description="Helical" evidence="2">
    <location>
        <begin position="164"/>
        <end position="184"/>
    </location>
</feature>
<feature type="topological domain" description="Cytoplasmic" evidence="2">
    <location>
        <begin position="185"/>
        <end position="511"/>
    </location>
</feature>
<feature type="domain" description="HAMP" evidence="3">
    <location>
        <begin position="186"/>
        <end position="238"/>
    </location>
</feature>
<feature type="domain" description="Histidine kinase" evidence="4">
    <location>
        <begin position="246"/>
        <end position="466"/>
    </location>
</feature>
<feature type="region of interest" description="Disordered" evidence="5">
    <location>
        <begin position="468"/>
        <end position="511"/>
    </location>
</feature>
<feature type="compositionally biased region" description="Basic and acidic residues" evidence="5">
    <location>
        <begin position="476"/>
        <end position="485"/>
    </location>
</feature>
<feature type="compositionally biased region" description="Polar residues" evidence="5">
    <location>
        <begin position="491"/>
        <end position="511"/>
    </location>
</feature>
<feature type="modified residue" description="Phosphohistidine; by autocatalysis" evidence="4">
    <location>
        <position position="249"/>
    </location>
</feature>
<evidence type="ECO:0000250" key="1"/>
<evidence type="ECO:0000255" key="2"/>
<evidence type="ECO:0000255" key="3">
    <source>
        <dbReference type="PROSITE-ProRule" id="PRU00102"/>
    </source>
</evidence>
<evidence type="ECO:0000255" key="4">
    <source>
        <dbReference type="PROSITE-ProRule" id="PRU00107"/>
    </source>
</evidence>
<evidence type="ECO:0000256" key="5">
    <source>
        <dbReference type="SAM" id="MobiDB-lite"/>
    </source>
</evidence>
<evidence type="ECO:0000305" key="6"/>
<reference key="1">
    <citation type="journal article" date="2007" name="Genome Res.">
        <title>Reductive evolution and niche adaptation inferred from the genome of Mycobacterium ulcerans, the causative agent of Buruli ulcer.</title>
        <authorList>
            <person name="Stinear T.P."/>
            <person name="Seemann T."/>
            <person name="Pidot S."/>
            <person name="Frigui W."/>
            <person name="Reysset G."/>
            <person name="Garnier T."/>
            <person name="Meurice G."/>
            <person name="Simon D."/>
            <person name="Bouchier C."/>
            <person name="Ma L."/>
            <person name="Tichit M."/>
            <person name="Porter J.L."/>
            <person name="Ryan J."/>
            <person name="Johnson P.D.R."/>
            <person name="Davies J.K."/>
            <person name="Jenkin G.A."/>
            <person name="Small P.L.C."/>
            <person name="Jones L.M."/>
            <person name="Tekaia F."/>
            <person name="Laval F."/>
            <person name="Daffe M."/>
            <person name="Parkhill J."/>
            <person name="Cole S.T."/>
        </authorList>
    </citation>
    <scope>NUCLEOTIDE SEQUENCE [LARGE SCALE GENOMIC DNA]</scope>
    <source>
        <strain>Agy99</strain>
    </source>
</reference>
<proteinExistence type="inferred from homology"/>
<dbReference type="EC" id="2.7.13.3"/>
<dbReference type="EC" id="3.1.3.-"/>
<dbReference type="EMBL" id="CP000325">
    <property type="protein sequence ID" value="ABL06632.1"/>
    <property type="molecule type" value="Genomic_DNA"/>
</dbReference>
<dbReference type="RefSeq" id="WP_011742227.1">
    <property type="nucleotide sequence ID" value="NC_008611.1"/>
</dbReference>
<dbReference type="SMR" id="A0PWB3"/>
<dbReference type="KEGG" id="mul:MUL_4700"/>
<dbReference type="eggNOG" id="COG2205">
    <property type="taxonomic scope" value="Bacteria"/>
</dbReference>
<dbReference type="HOGENOM" id="CLU_000445_89_6_11"/>
<dbReference type="Proteomes" id="UP000000765">
    <property type="component" value="Chromosome"/>
</dbReference>
<dbReference type="GO" id="GO:0005886">
    <property type="term" value="C:plasma membrane"/>
    <property type="evidence" value="ECO:0007669"/>
    <property type="project" value="UniProtKB-SubCell"/>
</dbReference>
<dbReference type="GO" id="GO:0005524">
    <property type="term" value="F:ATP binding"/>
    <property type="evidence" value="ECO:0007669"/>
    <property type="project" value="UniProtKB-KW"/>
</dbReference>
<dbReference type="GO" id="GO:0004721">
    <property type="term" value="F:phosphoprotein phosphatase activity"/>
    <property type="evidence" value="ECO:0007669"/>
    <property type="project" value="UniProtKB-KW"/>
</dbReference>
<dbReference type="GO" id="GO:0000155">
    <property type="term" value="F:phosphorelay sensor kinase activity"/>
    <property type="evidence" value="ECO:0007669"/>
    <property type="project" value="InterPro"/>
</dbReference>
<dbReference type="CDD" id="cd06225">
    <property type="entry name" value="HAMP"/>
    <property type="match status" value="1"/>
</dbReference>
<dbReference type="CDD" id="cd00075">
    <property type="entry name" value="HATPase"/>
    <property type="match status" value="1"/>
</dbReference>
<dbReference type="CDD" id="cd00082">
    <property type="entry name" value="HisKA"/>
    <property type="match status" value="1"/>
</dbReference>
<dbReference type="FunFam" id="1.10.287.130:FF:000031">
    <property type="entry name" value="Two-component sensor histidine kinase"/>
    <property type="match status" value="1"/>
</dbReference>
<dbReference type="FunFam" id="3.30.565.10:FF:000066">
    <property type="entry name" value="Two-component sensor kinase MprB"/>
    <property type="match status" value="1"/>
</dbReference>
<dbReference type="Gene3D" id="1.10.287.130">
    <property type="match status" value="1"/>
</dbReference>
<dbReference type="Gene3D" id="6.10.340.10">
    <property type="match status" value="1"/>
</dbReference>
<dbReference type="Gene3D" id="3.30.565.10">
    <property type="entry name" value="Histidine kinase-like ATPase, C-terminal domain"/>
    <property type="match status" value="1"/>
</dbReference>
<dbReference type="InterPro" id="IPR050980">
    <property type="entry name" value="2C_sensor_his_kinase"/>
</dbReference>
<dbReference type="InterPro" id="IPR003660">
    <property type="entry name" value="HAMP_dom"/>
</dbReference>
<dbReference type="InterPro" id="IPR036890">
    <property type="entry name" value="HATPase_C_sf"/>
</dbReference>
<dbReference type="InterPro" id="IPR005467">
    <property type="entry name" value="His_kinase_dom"/>
</dbReference>
<dbReference type="InterPro" id="IPR003661">
    <property type="entry name" value="HisK_dim/P_dom"/>
</dbReference>
<dbReference type="InterPro" id="IPR036097">
    <property type="entry name" value="HisK_dim/P_sf"/>
</dbReference>
<dbReference type="InterPro" id="IPR004358">
    <property type="entry name" value="Sig_transdc_His_kin-like_C"/>
</dbReference>
<dbReference type="PANTHER" id="PTHR44936">
    <property type="entry name" value="SENSOR PROTEIN CREC"/>
    <property type="match status" value="1"/>
</dbReference>
<dbReference type="PANTHER" id="PTHR44936:SF9">
    <property type="entry name" value="SENSOR PROTEIN CREC"/>
    <property type="match status" value="1"/>
</dbReference>
<dbReference type="Pfam" id="PF00672">
    <property type="entry name" value="HAMP"/>
    <property type="match status" value="1"/>
</dbReference>
<dbReference type="Pfam" id="PF02518">
    <property type="entry name" value="HATPase_c"/>
    <property type="match status" value="1"/>
</dbReference>
<dbReference type="Pfam" id="PF00512">
    <property type="entry name" value="HisKA"/>
    <property type="match status" value="1"/>
</dbReference>
<dbReference type="PRINTS" id="PR00344">
    <property type="entry name" value="BCTRLSENSOR"/>
</dbReference>
<dbReference type="SMART" id="SM00304">
    <property type="entry name" value="HAMP"/>
    <property type="match status" value="1"/>
</dbReference>
<dbReference type="SMART" id="SM00387">
    <property type="entry name" value="HATPase_c"/>
    <property type="match status" value="1"/>
</dbReference>
<dbReference type="SMART" id="SM00388">
    <property type="entry name" value="HisKA"/>
    <property type="match status" value="1"/>
</dbReference>
<dbReference type="SUPFAM" id="SSF55874">
    <property type="entry name" value="ATPase domain of HSP90 chaperone/DNA topoisomerase II/histidine kinase"/>
    <property type="match status" value="1"/>
</dbReference>
<dbReference type="SUPFAM" id="SSF158472">
    <property type="entry name" value="HAMP domain-like"/>
    <property type="match status" value="1"/>
</dbReference>
<dbReference type="SUPFAM" id="SSF47384">
    <property type="entry name" value="Homodimeric domain of signal transducing histidine kinase"/>
    <property type="match status" value="1"/>
</dbReference>
<dbReference type="PROSITE" id="PS50885">
    <property type="entry name" value="HAMP"/>
    <property type="match status" value="1"/>
</dbReference>
<dbReference type="PROSITE" id="PS50109">
    <property type="entry name" value="HIS_KIN"/>
    <property type="match status" value="1"/>
</dbReference>
<accession>A0PWB3</accession>
<gene>
    <name type="primary">mprB</name>
    <name type="ordered locus">MUL_4700</name>
</gene>
<keyword id="KW-0067">ATP-binding</keyword>
<keyword id="KW-1003">Cell membrane</keyword>
<keyword id="KW-0378">Hydrolase</keyword>
<keyword id="KW-0418">Kinase</keyword>
<keyword id="KW-0460">Magnesium</keyword>
<keyword id="KW-0464">Manganese</keyword>
<keyword id="KW-0472">Membrane</keyword>
<keyword id="KW-0547">Nucleotide-binding</keyword>
<keyword id="KW-0597">Phosphoprotein</keyword>
<keyword id="KW-0904">Protein phosphatase</keyword>
<keyword id="KW-0346">Stress response</keyword>
<keyword id="KW-0808">Transferase</keyword>
<keyword id="KW-0812">Transmembrane</keyword>
<keyword id="KW-1133">Transmembrane helix</keyword>
<keyword id="KW-0902">Two-component regulatory system</keyword>
<keyword id="KW-0843">Virulence</keyword>
<sequence>MVGFRRGPRAPLRATSSLSLRWRVMLLAMSMVAMVVVLMSFAVYAVISAALYSDIDNQLQSRAQLLIASGSLAADPGKAIEGTAYSDVNAMLVNPGRSIYTANQPGQTLPVGAPEKAVIHGDLFLSRRTVSDQRVLAIHLPNGSSLLISKSLKPTEAVMTKLRAVLLIVGGVGVAVAAVAGGMVTRAGLRPVGRLTEAAERVARTDDLRPIPVFGSDELARLTEAFNLMLRALAESRERQARLVSDAGHELRTPLTSLRTNVELLMASMEPGAPRLPEQEMVGLREDVVAQIEELSTLVGDLVDLTRGDAGVVVHEPVDMAEVVDRSLERVRRRRNDIHFDVDVVGWQVYGDAAGLSRAALNLMDNAAKWSPPGGRVGIRLRQLDPSHAELVVSDNGPGISPQERRLVFERFYRSTSARAMPGSGLGLAIVKQVVLNHGGSLRIEDTVPGGQPPGTAICMLLPGRPMPDSAYPAAPDDKKTEPVDTRGANGANSRGSANVISVDSQSARAR</sequence>
<comment type="function">
    <text evidence="1">Member of the two-component regulatory system MprB/MprA which contributes to maintaining a balance among several systems involved in stress resistance and is required for establishment and maintenance of persistent infection in the host. In response to environmental signals MprB acts both as a membrane-associated protein kinase that undergoes autophosphorylation and subsequently transfers the phosphate to MprA, and a protein phosphatase that dephosphorylates phospho-MprA (By similarity).</text>
</comment>
<comment type="catalytic activity">
    <reaction>
        <text>ATP + protein L-histidine = ADP + protein N-phospho-L-histidine.</text>
        <dbReference type="EC" id="2.7.13.3"/>
    </reaction>
</comment>
<comment type="cofactor">
    <cofactor evidence="1">
        <name>Mg(2+)</name>
        <dbReference type="ChEBI" id="CHEBI:18420"/>
    </cofactor>
    <cofactor evidence="1">
        <name>Mn(2+)</name>
        <dbReference type="ChEBI" id="CHEBI:29035"/>
    </cofactor>
</comment>
<comment type="subcellular location">
    <subcellularLocation>
        <location evidence="6">Cell membrane</location>
        <topology evidence="6">Multi-pass membrane protein</topology>
    </subcellularLocation>
</comment>
<comment type="PTM">
    <text evidence="1">Autophosphorylated.</text>
</comment>